<dbReference type="EMBL" id="AE016877">
    <property type="protein sequence ID" value="AAP07866.1"/>
    <property type="status" value="ALT_INIT"/>
    <property type="molecule type" value="Genomic_DNA"/>
</dbReference>
<dbReference type="RefSeq" id="NP_830665.1">
    <property type="nucleotide sequence ID" value="NC_004722.1"/>
</dbReference>
<dbReference type="RefSeq" id="WP_002195186.1">
    <property type="nucleotide sequence ID" value="NZ_CP138336.1"/>
</dbReference>
<dbReference type="STRING" id="226900.BC_0879"/>
<dbReference type="KEGG" id="bce:BC0879"/>
<dbReference type="PATRIC" id="fig|226900.8.peg.823"/>
<dbReference type="HOGENOM" id="CLU_042384_0_0_9"/>
<dbReference type="OrthoDB" id="9787430at2"/>
<dbReference type="Proteomes" id="UP000001417">
    <property type="component" value="Chromosome"/>
</dbReference>
<dbReference type="GO" id="GO:0005886">
    <property type="term" value="C:plasma membrane"/>
    <property type="evidence" value="ECO:0007669"/>
    <property type="project" value="UniProtKB-SubCell"/>
</dbReference>
<dbReference type="InterPro" id="IPR007383">
    <property type="entry name" value="DUF445"/>
</dbReference>
<dbReference type="InterPro" id="IPR016991">
    <property type="entry name" value="UCP032178"/>
</dbReference>
<dbReference type="PANTHER" id="PTHR35791">
    <property type="entry name" value="UPF0754 MEMBRANE PROTEIN YHEB"/>
    <property type="match status" value="1"/>
</dbReference>
<dbReference type="PANTHER" id="PTHR35791:SF1">
    <property type="entry name" value="UPF0754 MEMBRANE PROTEIN YHEB"/>
    <property type="match status" value="1"/>
</dbReference>
<dbReference type="Pfam" id="PF04286">
    <property type="entry name" value="DUF445"/>
    <property type="match status" value="1"/>
</dbReference>
<dbReference type="PIRSF" id="PIRSF032178">
    <property type="entry name" value="UCP032178"/>
    <property type="match status" value="1"/>
</dbReference>
<sequence length="378" mass="42786">MNIWLNMLTTTGLGAIIGGYTNHLAIKMLFRPHRPIYIGKFQVPFTPGLIPKRRDELAVQLGKMVVEHLLTPEGIGKKLTNEEFQKGLIHWAQVEVDKVITNEQSLRHMLEKWNVAHVEEEATRKIEHVITEKIHAFLAEYYTYTWEQALPHSVNEKVENAIPNVSAFILERGISFFESEEGKARLSKMIDDFFASRGTLLNLVGMFLGNVSVVDRVQPEVIKFLGQDATKQLLTDVLQKEWEKLKGRDVKELEAFVEKEMIVSSVLSAVKVEETVSKFLNQSVQQVCEPVRETIIEKVVPSAVAKGLKWGTENVESILNNLHLAEIVQQEVSTFSTERLEDLVLSITKNELKMITYLGALLGGMIGLVQGLLLLFLR</sequence>
<reference key="1">
    <citation type="journal article" date="2003" name="Nature">
        <title>Genome sequence of Bacillus cereus and comparative analysis with Bacillus anthracis.</title>
        <authorList>
            <person name="Ivanova N."/>
            <person name="Sorokin A."/>
            <person name="Anderson I."/>
            <person name="Galleron N."/>
            <person name="Candelon B."/>
            <person name="Kapatral V."/>
            <person name="Bhattacharyya A."/>
            <person name="Reznik G."/>
            <person name="Mikhailova N."/>
            <person name="Lapidus A."/>
            <person name="Chu L."/>
            <person name="Mazur M."/>
            <person name="Goltsman E."/>
            <person name="Larsen N."/>
            <person name="D'Souza M."/>
            <person name="Walunas T."/>
            <person name="Grechkin Y."/>
            <person name="Pusch G."/>
            <person name="Haselkorn R."/>
            <person name="Fonstein M."/>
            <person name="Ehrlich S.D."/>
            <person name="Overbeek R."/>
            <person name="Kyrpides N.C."/>
        </authorList>
    </citation>
    <scope>NUCLEOTIDE SEQUENCE [LARGE SCALE GENOMIC DNA]</scope>
    <source>
        <strain>ATCC 14579 / DSM 31 / CCUG 7414 / JCM 2152 / NBRC 15305 / NCIMB 9373 / NCTC 2599 / NRRL B-3711</strain>
    </source>
</reference>
<organism>
    <name type="scientific">Bacillus cereus (strain ATCC 14579 / DSM 31 / CCUG 7414 / JCM 2152 / NBRC 15305 / NCIMB 9373 / NCTC 2599 / NRRL B-3711)</name>
    <dbReference type="NCBI Taxonomy" id="226900"/>
    <lineage>
        <taxon>Bacteria</taxon>
        <taxon>Bacillati</taxon>
        <taxon>Bacillota</taxon>
        <taxon>Bacilli</taxon>
        <taxon>Bacillales</taxon>
        <taxon>Bacillaceae</taxon>
        <taxon>Bacillus</taxon>
        <taxon>Bacillus cereus group</taxon>
    </lineage>
</organism>
<evidence type="ECO:0000250" key="1"/>
<evidence type="ECO:0000255" key="2"/>
<evidence type="ECO:0000305" key="3"/>
<proteinExistence type="inferred from homology"/>
<name>Y879_BACCR</name>
<accession>Q813Y0</accession>
<keyword id="KW-1003">Cell membrane</keyword>
<keyword id="KW-0472">Membrane</keyword>
<keyword id="KW-1185">Reference proteome</keyword>
<keyword id="KW-0812">Transmembrane</keyword>
<keyword id="KW-1133">Transmembrane helix</keyword>
<protein>
    <recommendedName>
        <fullName>UPF0754 membrane protein BC_0879</fullName>
    </recommendedName>
</protein>
<comment type="subcellular location">
    <subcellularLocation>
        <location evidence="1">Cell membrane</location>
        <topology evidence="1">Single-pass membrane protein</topology>
    </subcellularLocation>
</comment>
<comment type="similarity">
    <text evidence="3">Belongs to the UPF0754 family.</text>
</comment>
<comment type="sequence caution" evidence="3">
    <conflict type="erroneous initiation">
        <sequence resource="EMBL-CDS" id="AAP07866"/>
    </conflict>
</comment>
<gene>
    <name type="ordered locus">BC_0879</name>
</gene>
<feature type="chain" id="PRO_0000388272" description="UPF0754 membrane protein BC_0879">
    <location>
        <begin position="1"/>
        <end position="378"/>
    </location>
</feature>
<feature type="transmembrane region" description="Helical" evidence="2">
    <location>
        <begin position="357"/>
        <end position="377"/>
    </location>
</feature>